<name>Y449_METJA</name>
<gene>
    <name type="ordered locus">MJ0449</name>
</gene>
<feature type="chain" id="PRO_0000206139" description="Uncharacterized transporter MJ0449">
    <location>
        <begin position="1"/>
        <end position="283"/>
    </location>
</feature>
<feature type="transmembrane region" description="Helical" evidence="1">
    <location>
        <begin position="8"/>
        <end position="28"/>
    </location>
</feature>
<feature type="transmembrane region" description="Helical" evidence="1">
    <location>
        <begin position="38"/>
        <end position="58"/>
    </location>
</feature>
<feature type="transmembrane region" description="Helical" evidence="1">
    <location>
        <begin position="73"/>
        <end position="93"/>
    </location>
</feature>
<feature type="transmembrane region" description="Helical" evidence="1">
    <location>
        <begin position="100"/>
        <end position="120"/>
    </location>
</feature>
<feature type="transmembrane region" description="Helical" evidence="1">
    <location>
        <begin position="175"/>
        <end position="195"/>
    </location>
</feature>
<comment type="subcellular location">
    <subcellularLocation>
        <location evidence="2">Cell membrane</location>
        <topology evidence="2">Multi-pass membrane protein</topology>
    </subcellularLocation>
</comment>
<comment type="similarity">
    <text evidence="2">Belongs to the cation diffusion facilitator (CDF) transporter (TC 2.A.4) family.</text>
</comment>
<organism>
    <name type="scientific">Methanocaldococcus jannaschii (strain ATCC 43067 / DSM 2661 / JAL-1 / JCM 10045 / NBRC 100440)</name>
    <name type="common">Methanococcus jannaschii</name>
    <dbReference type="NCBI Taxonomy" id="243232"/>
    <lineage>
        <taxon>Archaea</taxon>
        <taxon>Methanobacteriati</taxon>
        <taxon>Methanobacteriota</taxon>
        <taxon>Methanomada group</taxon>
        <taxon>Methanococci</taxon>
        <taxon>Methanococcales</taxon>
        <taxon>Methanocaldococcaceae</taxon>
        <taxon>Methanocaldococcus</taxon>
    </lineage>
</organism>
<keyword id="KW-1003">Cell membrane</keyword>
<keyword id="KW-0472">Membrane</keyword>
<keyword id="KW-1185">Reference proteome</keyword>
<keyword id="KW-0812">Transmembrane</keyword>
<keyword id="KW-1133">Transmembrane helix</keyword>
<keyword id="KW-0813">Transport</keyword>
<protein>
    <recommendedName>
        <fullName>Uncharacterized transporter MJ0449</fullName>
    </recommendedName>
</protein>
<sequence length="283" mass="31286">MREVEKPLILSIVGNILLGLIKIIIGYVYSSISLISDGIHSLSDVITSIIGIIGVKIASKPPDESHPYGHSRFECLFSFFIGLALFFTAYEIGKFAVERIIYGEVIEVNAIMVGVAILSIVVKELMTRYSLFVGKKLNSQVLIADAYHHRSDALSSVVVLVGLLLQKFGIYYGDAIAGIIVALMIAKVAFDICLTNIDYLTGRAPPKKFFELIEKEALNVDKVIGVHDIKAHYVGPRIHVELHVEVPSNISAKEMHDIEVAVKNRLESLENVERAYVHVDIVD</sequence>
<reference key="1">
    <citation type="journal article" date="1996" name="Science">
        <title>Complete genome sequence of the methanogenic archaeon, Methanococcus jannaschii.</title>
        <authorList>
            <person name="Bult C.J."/>
            <person name="White O."/>
            <person name="Olsen G.J."/>
            <person name="Zhou L."/>
            <person name="Fleischmann R.D."/>
            <person name="Sutton G.G."/>
            <person name="Blake J.A."/>
            <person name="FitzGerald L.M."/>
            <person name="Clayton R.A."/>
            <person name="Gocayne J.D."/>
            <person name="Kerlavage A.R."/>
            <person name="Dougherty B.A."/>
            <person name="Tomb J.-F."/>
            <person name="Adams M.D."/>
            <person name="Reich C.I."/>
            <person name="Overbeek R."/>
            <person name="Kirkness E.F."/>
            <person name="Weinstock K.G."/>
            <person name="Merrick J.M."/>
            <person name="Glodek A."/>
            <person name="Scott J.L."/>
            <person name="Geoghagen N.S.M."/>
            <person name="Weidman J.F."/>
            <person name="Fuhrmann J.L."/>
            <person name="Nguyen D."/>
            <person name="Utterback T.R."/>
            <person name="Kelley J.M."/>
            <person name="Peterson J.D."/>
            <person name="Sadow P.W."/>
            <person name="Hanna M.C."/>
            <person name="Cotton M.D."/>
            <person name="Roberts K.M."/>
            <person name="Hurst M.A."/>
            <person name="Kaine B.P."/>
            <person name="Borodovsky M."/>
            <person name="Klenk H.-P."/>
            <person name="Fraser C.M."/>
            <person name="Smith H.O."/>
            <person name="Woese C.R."/>
            <person name="Venter J.C."/>
        </authorList>
    </citation>
    <scope>NUCLEOTIDE SEQUENCE [LARGE SCALE GENOMIC DNA]</scope>
    <source>
        <strain>ATCC 43067 / DSM 2661 / JAL-1 / JCM 10045 / NBRC 100440</strain>
    </source>
</reference>
<proteinExistence type="inferred from homology"/>
<dbReference type="EMBL" id="L77117">
    <property type="protein sequence ID" value="AAB98438.1"/>
    <property type="molecule type" value="Genomic_DNA"/>
</dbReference>
<dbReference type="PIR" id="A64356">
    <property type="entry name" value="A64356"/>
</dbReference>
<dbReference type="RefSeq" id="WP_010869948.1">
    <property type="nucleotide sequence ID" value="NC_000909.1"/>
</dbReference>
<dbReference type="SMR" id="Q57891"/>
<dbReference type="FunCoup" id="Q57891">
    <property type="interactions" value="53"/>
</dbReference>
<dbReference type="STRING" id="243232.MJ_0449"/>
<dbReference type="PaxDb" id="243232-MJ_0449"/>
<dbReference type="EnsemblBacteria" id="AAB98438">
    <property type="protein sequence ID" value="AAB98438"/>
    <property type="gene ID" value="MJ_0449"/>
</dbReference>
<dbReference type="GeneID" id="1451309"/>
<dbReference type="KEGG" id="mja:MJ_0449"/>
<dbReference type="eggNOG" id="arCOG01474">
    <property type="taxonomic scope" value="Archaea"/>
</dbReference>
<dbReference type="HOGENOM" id="CLU_013430_3_3_2"/>
<dbReference type="InParanoid" id="Q57891"/>
<dbReference type="OrthoDB" id="8907at2157"/>
<dbReference type="PhylomeDB" id="Q57891"/>
<dbReference type="Proteomes" id="UP000000805">
    <property type="component" value="Chromosome"/>
</dbReference>
<dbReference type="GO" id="GO:0016020">
    <property type="term" value="C:membrane"/>
    <property type="evidence" value="ECO:0000318"/>
    <property type="project" value="GO_Central"/>
</dbReference>
<dbReference type="GO" id="GO:0005886">
    <property type="term" value="C:plasma membrane"/>
    <property type="evidence" value="ECO:0007669"/>
    <property type="project" value="UniProtKB-SubCell"/>
</dbReference>
<dbReference type="GO" id="GO:0008324">
    <property type="term" value="F:monoatomic cation transmembrane transporter activity"/>
    <property type="evidence" value="ECO:0000318"/>
    <property type="project" value="GO_Central"/>
</dbReference>
<dbReference type="FunFam" id="1.20.1510.10:FF:000006">
    <property type="entry name" value="Divalent cation efflux transporter"/>
    <property type="match status" value="1"/>
</dbReference>
<dbReference type="Gene3D" id="1.20.1510.10">
    <property type="entry name" value="Cation efflux protein transmembrane domain"/>
    <property type="match status" value="1"/>
</dbReference>
<dbReference type="Gene3D" id="3.30.70.1350">
    <property type="entry name" value="Cation efflux protein, cytoplasmic domain"/>
    <property type="match status" value="1"/>
</dbReference>
<dbReference type="InterPro" id="IPR002524">
    <property type="entry name" value="Cation_efflux"/>
</dbReference>
<dbReference type="InterPro" id="IPR027470">
    <property type="entry name" value="Cation_efflux_CTD"/>
</dbReference>
<dbReference type="InterPro" id="IPR036837">
    <property type="entry name" value="Cation_efflux_CTD_sf"/>
</dbReference>
<dbReference type="InterPro" id="IPR027469">
    <property type="entry name" value="Cation_efflux_TMD_sf"/>
</dbReference>
<dbReference type="InterPro" id="IPR050291">
    <property type="entry name" value="CDF_Transporter"/>
</dbReference>
<dbReference type="NCBIfam" id="TIGR01297">
    <property type="entry name" value="CDF"/>
    <property type="match status" value="1"/>
</dbReference>
<dbReference type="PANTHER" id="PTHR43840">
    <property type="entry name" value="MITOCHONDRIAL METAL TRANSPORTER 1-RELATED"/>
    <property type="match status" value="1"/>
</dbReference>
<dbReference type="PANTHER" id="PTHR43840:SF15">
    <property type="entry name" value="MITOCHONDRIAL METAL TRANSPORTER 1-RELATED"/>
    <property type="match status" value="1"/>
</dbReference>
<dbReference type="Pfam" id="PF01545">
    <property type="entry name" value="Cation_efflux"/>
    <property type="match status" value="1"/>
</dbReference>
<dbReference type="Pfam" id="PF16916">
    <property type="entry name" value="ZT_dimer"/>
    <property type="match status" value="1"/>
</dbReference>
<dbReference type="SUPFAM" id="SSF160240">
    <property type="entry name" value="Cation efflux protein cytoplasmic domain-like"/>
    <property type="match status" value="1"/>
</dbReference>
<dbReference type="SUPFAM" id="SSF161111">
    <property type="entry name" value="Cation efflux protein transmembrane domain-like"/>
    <property type="match status" value="1"/>
</dbReference>
<evidence type="ECO:0000255" key="1"/>
<evidence type="ECO:0000305" key="2"/>
<accession>Q57891</accession>